<organism>
    <name type="scientific">Saccharomyces cerevisiae (strain ATCC 204508 / S288c)</name>
    <name type="common">Baker's yeast</name>
    <dbReference type="NCBI Taxonomy" id="559292"/>
    <lineage>
        <taxon>Eukaryota</taxon>
        <taxon>Fungi</taxon>
        <taxon>Dikarya</taxon>
        <taxon>Ascomycota</taxon>
        <taxon>Saccharomycotina</taxon>
        <taxon>Saccharomycetes</taxon>
        <taxon>Saccharomycetales</taxon>
        <taxon>Saccharomycetaceae</taxon>
        <taxon>Saccharomyces</taxon>
    </lineage>
</organism>
<proteinExistence type="predicted"/>
<feature type="chain" id="PRO_0000202434" description="Uncharacterized protein YAR068W">
    <location>
        <begin position="1"/>
        <end position="161"/>
    </location>
</feature>
<gene>
    <name type="ordered locus">YAR068W</name>
</gene>
<keyword id="KW-1185">Reference proteome</keyword>
<reference key="1">
    <citation type="submission" date="1994-02" db="EMBL/GenBank/DDBJ databases">
        <title>Sequencing of chromosome I of Saccharomyces cerevisiae: analysis of the 52 Kbp CDC15-FLO1-PHO11-YAR074 region.</title>
        <authorList>
            <person name="Bussey H."/>
            <person name="Keng T."/>
            <person name="Storms R.K."/>
            <person name="Vo D."/>
            <person name="Zhong W."/>
            <person name="Fortin N."/>
            <person name="Barton A.B."/>
            <person name="Kaback D.B."/>
            <person name="Clark M.W."/>
        </authorList>
    </citation>
    <scope>NUCLEOTIDE SEQUENCE [GENOMIC DNA]</scope>
    <source>
        <strain>ATCC 204511 / S288c / AB972</strain>
    </source>
</reference>
<reference key="2">
    <citation type="journal article" date="1995" name="Proc. Natl. Acad. Sci. U.S.A.">
        <title>The nucleotide sequence of chromosome I from Saccharomyces cerevisiae.</title>
        <authorList>
            <person name="Bussey H."/>
            <person name="Kaback D.B."/>
            <person name="Zhong W.-W."/>
            <person name="Vo D.H."/>
            <person name="Clark M.W."/>
            <person name="Fortin N."/>
            <person name="Hall J."/>
            <person name="Ouellette B.F.F."/>
            <person name="Keng T."/>
            <person name="Barton A.B."/>
            <person name="Su Y."/>
            <person name="Davies C.J."/>
            <person name="Storms R.K."/>
        </authorList>
    </citation>
    <scope>NUCLEOTIDE SEQUENCE [LARGE SCALE GENOMIC DNA]</scope>
    <source>
        <strain>ATCC 204508 / S288c</strain>
    </source>
</reference>
<reference key="3">
    <citation type="journal article" date="2014" name="G3 (Bethesda)">
        <title>The reference genome sequence of Saccharomyces cerevisiae: Then and now.</title>
        <authorList>
            <person name="Engel S.R."/>
            <person name="Dietrich F.S."/>
            <person name="Fisk D.G."/>
            <person name="Binkley G."/>
            <person name="Balakrishnan R."/>
            <person name="Costanzo M.C."/>
            <person name="Dwight S.S."/>
            <person name="Hitz B.C."/>
            <person name="Karra K."/>
            <person name="Nash R.S."/>
            <person name="Weng S."/>
            <person name="Wong E.D."/>
            <person name="Lloyd P."/>
            <person name="Skrzypek M.S."/>
            <person name="Miyasato S.R."/>
            <person name="Simison M."/>
            <person name="Cherry J.M."/>
        </authorList>
    </citation>
    <scope>GENOME REANNOTATION</scope>
    <source>
        <strain>ATCC 204508 / S288c</strain>
    </source>
</reference>
<reference key="4">
    <citation type="journal article" date="2007" name="Genome Res.">
        <title>Approaching a complete repository of sequence-verified protein-encoding clones for Saccharomyces cerevisiae.</title>
        <authorList>
            <person name="Hu Y."/>
            <person name="Rolfs A."/>
            <person name="Bhullar B."/>
            <person name="Murthy T.V.S."/>
            <person name="Zhu C."/>
            <person name="Berger M.F."/>
            <person name="Camargo A.A."/>
            <person name="Kelley F."/>
            <person name="McCarron S."/>
            <person name="Jepson D."/>
            <person name="Richardson A."/>
            <person name="Raphael J."/>
            <person name="Moreira D."/>
            <person name="Taycher E."/>
            <person name="Zuo D."/>
            <person name="Mohr S."/>
            <person name="Kane M.F."/>
            <person name="Williamson J."/>
            <person name="Simpson A.J.G."/>
            <person name="Bulyk M.L."/>
            <person name="Harlow E."/>
            <person name="Marsischky G."/>
            <person name="Kolodner R.D."/>
            <person name="LaBaer J."/>
        </authorList>
    </citation>
    <scope>NUCLEOTIDE SEQUENCE [GENOMIC DNA]</scope>
    <source>
        <strain>ATCC 204508 / S288c</strain>
    </source>
</reference>
<name>YAN8_YEAST</name>
<sequence>MPQVQSWFPVQKQPTLAVTFTPLPQLSHAHLPLPPSHLVTKTDAMFQHQLLPTQLQPFPPSHTPLLLLLTVTTMAVTPRLSLLNVLKKLQQPPFLQNHTLLLPLLTVTTTAVTPRLSLPRLPNKHHWPLAQSPSLLLQLLILLLPAPSLVLSFNPKVWLLV</sequence>
<accession>P39564</accession>
<accession>D6VPP0</accession>
<dbReference type="EMBL" id="L28920">
    <property type="protein sequence ID" value="AAC09505.1"/>
    <property type="molecule type" value="Genomic_DNA"/>
</dbReference>
<dbReference type="EMBL" id="AY692598">
    <property type="protein sequence ID" value="AAT92617.1"/>
    <property type="molecule type" value="Genomic_DNA"/>
</dbReference>
<dbReference type="EMBL" id="BK006935">
    <property type="protein sequence ID" value="DAA07010.1"/>
    <property type="molecule type" value="Genomic_DNA"/>
</dbReference>
<dbReference type="PIR" id="S53473">
    <property type="entry name" value="S53473"/>
</dbReference>
<dbReference type="RefSeq" id="NP_009431.1">
    <property type="nucleotide sequence ID" value="NM_001178236.1"/>
</dbReference>
<dbReference type="BioGRID" id="31818">
    <property type="interactions" value="17"/>
</dbReference>
<dbReference type="FunCoup" id="P39564">
    <property type="interactions" value="62"/>
</dbReference>
<dbReference type="IntAct" id="P39564">
    <property type="interactions" value="3"/>
</dbReference>
<dbReference type="MINT" id="P39564"/>
<dbReference type="STRING" id="4932.YAR068W"/>
<dbReference type="GlyGen" id="P39564">
    <property type="glycosylation" value="2 sites"/>
</dbReference>
<dbReference type="PaxDb" id="4932-YAR068W"/>
<dbReference type="EnsemblFungi" id="YAR068W_mRNA">
    <property type="protein sequence ID" value="YAR068W"/>
    <property type="gene ID" value="YAR068W"/>
</dbReference>
<dbReference type="GeneID" id="851296"/>
<dbReference type="KEGG" id="sce:YAR068W"/>
<dbReference type="AGR" id="SGD:S000000091"/>
<dbReference type="SGD" id="S000000091">
    <property type="gene designation" value="YAR068W"/>
</dbReference>
<dbReference type="VEuPathDB" id="FungiDB:YAR068W"/>
<dbReference type="HOGENOM" id="CLU_139335_0_0_1"/>
<dbReference type="InParanoid" id="P39564"/>
<dbReference type="BioCyc" id="YEAST:G3O-28888-MONOMER"/>
<dbReference type="PRO" id="PR:P39564"/>
<dbReference type="Proteomes" id="UP000002311">
    <property type="component" value="Chromosome I"/>
</dbReference>
<dbReference type="RNAct" id="P39564">
    <property type="molecule type" value="protein"/>
</dbReference>
<protein>
    <recommendedName>
        <fullName>Uncharacterized protein YAR068W</fullName>
    </recommendedName>
</protein>